<comment type="function">
    <text evidence="1">This protein specifically catalyzes the removal of signal peptides from prolipoproteins.</text>
</comment>
<comment type="catalytic activity">
    <reaction evidence="1">
        <text>Release of signal peptides from bacterial membrane prolipoproteins. Hydrolyzes -Xaa-Yaa-Zaa-|-(S,diacylglyceryl)Cys-, in which Xaa is hydrophobic (preferably Leu), and Yaa (Ala or Ser) and Zaa (Gly or Ala) have small, neutral side chains.</text>
        <dbReference type="EC" id="3.4.23.36"/>
    </reaction>
</comment>
<comment type="pathway">
    <text evidence="1">Protein modification; lipoprotein biosynthesis (signal peptide cleavage).</text>
</comment>
<comment type="subcellular location">
    <subcellularLocation>
        <location evidence="1">Cell inner membrane</location>
        <topology evidence="1">Multi-pass membrane protein</topology>
    </subcellularLocation>
</comment>
<comment type="similarity">
    <text evidence="1">Belongs to the peptidase A8 family.</text>
</comment>
<dbReference type="EC" id="3.4.23.36" evidence="1"/>
<dbReference type="EMBL" id="CP000381">
    <property type="protein sequence ID" value="ABX72596.1"/>
    <property type="molecule type" value="Genomic_DNA"/>
</dbReference>
<dbReference type="RefSeq" id="WP_012221292.1">
    <property type="nucleotide sequence ID" value="NC_010120.1"/>
</dbReference>
<dbReference type="SMR" id="A9M1J8"/>
<dbReference type="KEGG" id="nmn:NMCC_0390"/>
<dbReference type="HOGENOM" id="CLU_083252_4_0_4"/>
<dbReference type="UniPathway" id="UPA00665"/>
<dbReference type="Proteomes" id="UP000001177">
    <property type="component" value="Chromosome"/>
</dbReference>
<dbReference type="GO" id="GO:0005886">
    <property type="term" value="C:plasma membrane"/>
    <property type="evidence" value="ECO:0007669"/>
    <property type="project" value="UniProtKB-SubCell"/>
</dbReference>
<dbReference type="GO" id="GO:0004190">
    <property type="term" value="F:aspartic-type endopeptidase activity"/>
    <property type="evidence" value="ECO:0007669"/>
    <property type="project" value="UniProtKB-UniRule"/>
</dbReference>
<dbReference type="GO" id="GO:0006508">
    <property type="term" value="P:proteolysis"/>
    <property type="evidence" value="ECO:0007669"/>
    <property type="project" value="UniProtKB-KW"/>
</dbReference>
<dbReference type="HAMAP" id="MF_00161">
    <property type="entry name" value="LspA"/>
    <property type="match status" value="1"/>
</dbReference>
<dbReference type="InterPro" id="IPR001872">
    <property type="entry name" value="Peptidase_A8"/>
</dbReference>
<dbReference type="NCBIfam" id="TIGR00077">
    <property type="entry name" value="lspA"/>
    <property type="match status" value="1"/>
</dbReference>
<dbReference type="PANTHER" id="PTHR33695">
    <property type="entry name" value="LIPOPROTEIN SIGNAL PEPTIDASE"/>
    <property type="match status" value="1"/>
</dbReference>
<dbReference type="PANTHER" id="PTHR33695:SF1">
    <property type="entry name" value="LIPOPROTEIN SIGNAL PEPTIDASE"/>
    <property type="match status" value="1"/>
</dbReference>
<dbReference type="Pfam" id="PF01252">
    <property type="entry name" value="Peptidase_A8"/>
    <property type="match status" value="1"/>
</dbReference>
<dbReference type="PRINTS" id="PR00781">
    <property type="entry name" value="LIPOSIGPTASE"/>
</dbReference>
<dbReference type="PROSITE" id="PS00855">
    <property type="entry name" value="SPASE_II"/>
    <property type="match status" value="1"/>
</dbReference>
<proteinExistence type="inferred from homology"/>
<reference key="1">
    <citation type="journal article" date="2008" name="Genomics">
        <title>Characterization of ST-4821 complex, a unique Neisseria meningitidis clone.</title>
        <authorList>
            <person name="Peng J."/>
            <person name="Yang L."/>
            <person name="Yang F."/>
            <person name="Yang J."/>
            <person name="Yan Y."/>
            <person name="Nie H."/>
            <person name="Zhang X."/>
            <person name="Xiong Z."/>
            <person name="Jiang Y."/>
            <person name="Cheng F."/>
            <person name="Xu X."/>
            <person name="Chen S."/>
            <person name="Sun L."/>
            <person name="Li W."/>
            <person name="Shen Y."/>
            <person name="Shao Z."/>
            <person name="Liang X."/>
            <person name="Xu J."/>
            <person name="Jin Q."/>
        </authorList>
    </citation>
    <scope>NUCLEOTIDE SEQUENCE [LARGE SCALE GENOMIC DNA]</scope>
    <source>
        <strain>053442</strain>
    </source>
</reference>
<evidence type="ECO:0000255" key="1">
    <source>
        <dbReference type="HAMAP-Rule" id="MF_00161"/>
    </source>
</evidence>
<feature type="chain" id="PRO_1000076926" description="Lipoprotein signal peptidase">
    <location>
        <begin position="1"/>
        <end position="164"/>
    </location>
</feature>
<feature type="transmembrane region" description="Helical" evidence="1">
    <location>
        <begin position="11"/>
        <end position="31"/>
    </location>
</feature>
<feature type="transmembrane region" description="Helical" evidence="1">
    <location>
        <begin position="41"/>
        <end position="61"/>
    </location>
</feature>
<feature type="transmembrane region" description="Helical" evidence="1">
    <location>
        <begin position="64"/>
        <end position="84"/>
    </location>
</feature>
<feature type="transmembrane region" description="Helical" evidence="1">
    <location>
        <begin position="92"/>
        <end position="112"/>
    </location>
</feature>
<feature type="transmembrane region" description="Helical" evidence="1">
    <location>
        <begin position="132"/>
        <end position="152"/>
    </location>
</feature>
<feature type="active site" evidence="1">
    <location>
        <position position="122"/>
    </location>
</feature>
<feature type="active site" evidence="1">
    <location>
        <position position="140"/>
    </location>
</feature>
<protein>
    <recommendedName>
        <fullName evidence="1">Lipoprotein signal peptidase</fullName>
        <ecNumber evidence="1">3.4.23.36</ecNumber>
    </recommendedName>
    <alternativeName>
        <fullName evidence="1">Prolipoprotein signal peptidase</fullName>
    </alternativeName>
    <alternativeName>
        <fullName evidence="1">Signal peptidase II</fullName>
        <shortName evidence="1">SPase II</shortName>
    </alternativeName>
</protein>
<gene>
    <name evidence="1" type="primary">lspA</name>
    <name type="ordered locus">NMCC_0390</name>
</gene>
<accession>A9M1J8</accession>
<keyword id="KW-0064">Aspartyl protease</keyword>
<keyword id="KW-0997">Cell inner membrane</keyword>
<keyword id="KW-1003">Cell membrane</keyword>
<keyword id="KW-0378">Hydrolase</keyword>
<keyword id="KW-0472">Membrane</keyword>
<keyword id="KW-0645">Protease</keyword>
<keyword id="KW-0812">Transmembrane</keyword>
<keyword id="KW-1133">Transmembrane helix</keyword>
<sequence length="164" mass="18350">MSSSVSSKTRYWVLALAAIVLDQWSKWAVLSSFQYRERVNVIPSFFDLTLVYNPGAAFSFLADQGGWQKYFFLVLAVAVSAYLVRAILRDEFATLGKTGAAMIIGGALGNVIDRLIHGHVVDFLLFYWQNWFYPAFNIADSFICVGAVLAVLDNIVHRKDGKKT</sequence>
<organism>
    <name type="scientific">Neisseria meningitidis serogroup C (strain 053442)</name>
    <dbReference type="NCBI Taxonomy" id="374833"/>
    <lineage>
        <taxon>Bacteria</taxon>
        <taxon>Pseudomonadati</taxon>
        <taxon>Pseudomonadota</taxon>
        <taxon>Betaproteobacteria</taxon>
        <taxon>Neisseriales</taxon>
        <taxon>Neisseriaceae</taxon>
        <taxon>Neisseria</taxon>
    </lineage>
</organism>
<name>LSPA_NEIM0</name>